<protein>
    <recommendedName>
        <fullName evidence="4">Alternative squalene epoxidase</fullName>
        <shortName evidence="4">AltSQE</shortName>
        <ecNumber evidence="3">1.14.19.-</ecNumber>
    </recommendedName>
    <alternativeName>
        <fullName>Alternative squalene monooxygenase</fullName>
    </alternativeName>
</protein>
<accession>B7FXW1</accession>
<organism>
    <name type="scientific">Phaeodactylum tricornutum (strain CCAP 1055/1)</name>
    <dbReference type="NCBI Taxonomy" id="556484"/>
    <lineage>
        <taxon>Eukaryota</taxon>
        <taxon>Sar</taxon>
        <taxon>Stramenopiles</taxon>
        <taxon>Ochrophyta</taxon>
        <taxon>Bacillariophyta</taxon>
        <taxon>Bacillariophyceae</taxon>
        <taxon>Bacillariophycidae</taxon>
        <taxon>Naviculales</taxon>
        <taxon>Phaeodactylaceae</taxon>
        <taxon>Phaeodactylum</taxon>
    </lineage>
</organism>
<sequence>MLVDRVENNEKQQQQMASSSDAMSDSSLSDDEIIEHVVHGKEPKSTYELSWVSNAIAWSGALVWPLMLTVPLLLSSMYSPISYRQVFPESWYVYDTLSNCAPKPLGLVLGILAVAVGQVFVWIFFYLFKFGYLGTDPRSIQSKGAREYIFREGLLTHIGQPEGFVLLIGYLAITWMLKLMPQSYYSFEGTIQYKELFMCLVLQDGIQYTMHVLEHIVSPAFYQMSHKPHHRFTNPRLFDAFNGSLMDTFCMIIIPLFVTANLVRHCNVWTYMAFGSSYACWLTLIHSEYVFPWDGIFRKLGLGTPADHHVHHKFFKFNYGHLFMWFDQLGGTYRDPSGFAPRVFRENV</sequence>
<name>SQLE_PHATC</name>
<comment type="function">
    <text evidence="3">Catalyzes the stereospecific epoxidation of squalene at the terminal double bond to form (S)-2,3-epoxysqualene, the first oxygenation step in sterol biosynthesis.</text>
</comment>
<comment type="catalytic activity">
    <reaction evidence="3">
        <text>squalene + 2 Fe(II)-[cytochrome b5] + O2 + 2 H(+) = (S)-2,3-epoxysqualene + 2 Fe(III)-[cytochrome b5] + H2O</text>
        <dbReference type="Rhea" id="RHEA:58916"/>
        <dbReference type="Rhea" id="RHEA-COMP:10438"/>
        <dbReference type="Rhea" id="RHEA-COMP:10439"/>
        <dbReference type="ChEBI" id="CHEBI:15377"/>
        <dbReference type="ChEBI" id="CHEBI:15378"/>
        <dbReference type="ChEBI" id="CHEBI:15379"/>
        <dbReference type="ChEBI" id="CHEBI:15440"/>
        <dbReference type="ChEBI" id="CHEBI:15441"/>
        <dbReference type="ChEBI" id="CHEBI:29033"/>
        <dbReference type="ChEBI" id="CHEBI:29034"/>
    </reaction>
</comment>
<comment type="cofactor">
    <cofactor evidence="6">
        <name>Fe cation</name>
        <dbReference type="ChEBI" id="CHEBI:24875"/>
    </cofactor>
</comment>
<comment type="activity regulation">
    <text evidence="3">The activity of this enzyme is not inhibited by terbinafine, an established inhibitor of the conventional flavoprotein squalene epoxidase.</text>
</comment>
<comment type="pathway">
    <text evidence="6">Terpene metabolism; lanosterol biosynthesis; lanosterol from farnesyl diphosphate.</text>
</comment>
<comment type="subunit">
    <text evidence="3">Interacts with cytochrome b5/PHATRDRAFT_30770.</text>
</comment>
<comment type="subcellular location">
    <subcellularLocation>
        <location evidence="3">Endoplasmic reticulum membrane</location>
        <topology evidence="1">Multi-pass membrane protein</topology>
    </subcellularLocation>
    <text evidence="3">Detected in the outer envelope of chloroplasts, which is termed the chloroplast endoplasmic reticulum and is continuous with the nuclear envelope.</text>
</comment>
<comment type="domain">
    <text evidence="6">The histidine box motifs may contain the active site and/or be involved in metal ion binding.</text>
</comment>
<comment type="similarity">
    <text evidence="5">Belongs to the sterol desaturase family.</text>
</comment>
<reference key="1">
    <citation type="journal article" date="2019" name="Nat. Microbiol.">
        <title>A widespread alternative squalene epoxidase participates in eukaryote steroid biosynthesis.</title>
        <authorList>
            <person name="Pollier J."/>
            <person name="Vancaester E."/>
            <person name="Kuzhiumparambil U."/>
            <person name="Vickers C.E."/>
            <person name="Vandepoele K."/>
            <person name="Goossens A."/>
            <person name="Fabris M."/>
        </authorList>
    </citation>
    <scope>NUCLEOTIDE SEQUENCE [MRNA]</scope>
    <scope>FUNCTION</scope>
    <scope>CATALYTIC ACTIVITY</scope>
    <scope>SUBCELLULAR LOCATION</scope>
    <scope>MUTAGENESIS OF HIS-211; HIS-215; HIS-226; HIS-229; HIS-230; HIS-286; HIS-308; HIS-311 AND HIS-312</scope>
    <scope>PATHWAY</scope>
    <scope>COFACTOR</scope>
    <scope>ACTIVITY REGULATION</scope>
    <scope>INTERACTION WITH PHATRDRAFT_30770</scope>
    <scope>DOMAIN</scope>
    <source>
        <strain>CCAP 1055/1</strain>
    </source>
</reference>
<reference key="2">
    <citation type="journal article" date="2008" name="Nature">
        <title>The Phaeodactylum genome reveals the evolutionary history of diatom genomes.</title>
        <authorList>
            <person name="Bowler C."/>
            <person name="Allen A.E."/>
            <person name="Badger J.H."/>
            <person name="Grimwood J."/>
            <person name="Jabbari K."/>
            <person name="Kuo A."/>
            <person name="Maheswari U."/>
            <person name="Martens C."/>
            <person name="Maumus F."/>
            <person name="Otillar R.P."/>
            <person name="Rayko E."/>
            <person name="Salamov A."/>
            <person name="Vandepoele K."/>
            <person name="Beszteri B."/>
            <person name="Gruber A."/>
            <person name="Heijde M."/>
            <person name="Katinka M."/>
            <person name="Mock T."/>
            <person name="Valentin K."/>
            <person name="Verret F."/>
            <person name="Berges J.A."/>
            <person name="Brownlee C."/>
            <person name="Cadoret J.P."/>
            <person name="Chiovitti A."/>
            <person name="Choi C.J."/>
            <person name="Coesel S."/>
            <person name="De Martino A."/>
            <person name="Detter J.C."/>
            <person name="Durkin C."/>
            <person name="Falciatore A."/>
            <person name="Fournet J."/>
            <person name="Haruta M."/>
            <person name="Huysman M.J."/>
            <person name="Jenkins B.D."/>
            <person name="Jiroutova K."/>
            <person name="Jorgensen R.E."/>
            <person name="Joubert Y."/>
            <person name="Kaplan A."/>
            <person name="Kroger N."/>
            <person name="Kroth P.G."/>
            <person name="La Roche J."/>
            <person name="Lindquist E."/>
            <person name="Lommer M."/>
            <person name="Martin-Jezequel V."/>
            <person name="Lopez P.J."/>
            <person name="Lucas S."/>
            <person name="Mangogna M."/>
            <person name="McGinnis K."/>
            <person name="Medlin L.K."/>
            <person name="Montsant A."/>
            <person name="Oudot-Le Secq M.P."/>
            <person name="Napoli C."/>
            <person name="Obornik M."/>
            <person name="Parker M.S."/>
            <person name="Petit J.L."/>
            <person name="Porcel B.M."/>
            <person name="Poulsen N."/>
            <person name="Robison M."/>
            <person name="Rychlewski L."/>
            <person name="Rynearson T.A."/>
            <person name="Schmutz J."/>
            <person name="Shapiro H."/>
            <person name="Siaut M."/>
            <person name="Stanley M."/>
            <person name="Sussman M.R."/>
            <person name="Taylor A.R."/>
            <person name="Vardi A."/>
            <person name="von Dassow P."/>
            <person name="Vyverman W."/>
            <person name="Willis A."/>
            <person name="Wyrwicz L.S."/>
            <person name="Rokhsar D.S."/>
            <person name="Weissenbach J."/>
            <person name="Armbrust E.V."/>
            <person name="Green B.R."/>
            <person name="Van de Peer Y."/>
            <person name="Grigoriev I.V."/>
        </authorList>
    </citation>
    <scope>NUCLEOTIDE SEQUENCE [LARGE SCALE GENOMIC DNA]</scope>
    <source>
        <strain>CCAP 1055/1</strain>
    </source>
</reference>
<keyword id="KW-0256">Endoplasmic reticulum</keyword>
<keyword id="KW-0408">Iron</keyword>
<keyword id="KW-0444">Lipid biosynthesis</keyword>
<keyword id="KW-0443">Lipid metabolism</keyword>
<keyword id="KW-0472">Membrane</keyword>
<keyword id="KW-0560">Oxidoreductase</keyword>
<keyword id="KW-1185">Reference proteome</keyword>
<keyword id="KW-0752">Steroid biosynthesis</keyword>
<keyword id="KW-0812">Transmembrane</keyword>
<keyword id="KW-1133">Transmembrane helix</keyword>
<evidence type="ECO:0000255" key="1"/>
<evidence type="ECO:0000256" key="2">
    <source>
        <dbReference type="SAM" id="MobiDB-lite"/>
    </source>
</evidence>
<evidence type="ECO:0000269" key="3">
    <source>
    </source>
</evidence>
<evidence type="ECO:0000303" key="4">
    <source>
    </source>
</evidence>
<evidence type="ECO:0000305" key="5"/>
<evidence type="ECO:0000305" key="6">
    <source>
    </source>
</evidence>
<gene>
    <name type="ORF">PHATRDRAFT_45494</name>
</gene>
<proteinExistence type="evidence at protein level"/>
<feature type="chain" id="PRO_0000446442" description="Alternative squalene epoxidase">
    <location>
        <begin position="1"/>
        <end position="348"/>
    </location>
</feature>
<feature type="transmembrane region" description="Helical" evidence="1">
    <location>
        <begin position="55"/>
        <end position="75"/>
    </location>
</feature>
<feature type="transmembrane region" description="Helical" evidence="1">
    <location>
        <begin position="105"/>
        <end position="125"/>
    </location>
</feature>
<feature type="transmembrane region" description="Helical" evidence="1">
    <location>
        <begin position="153"/>
        <end position="173"/>
    </location>
</feature>
<feature type="transmembrane region" description="Helical" evidence="1">
    <location>
        <begin position="243"/>
        <end position="263"/>
    </location>
</feature>
<feature type="transmembrane region" description="Helical" evidence="1">
    <location>
        <begin position="277"/>
        <end position="297"/>
    </location>
</feature>
<feature type="domain" description="Fatty acid hydroxylase" evidence="1">
    <location>
        <begin position="197"/>
        <end position="332"/>
    </location>
</feature>
<feature type="region of interest" description="Disordered" evidence="2">
    <location>
        <begin position="1"/>
        <end position="26"/>
    </location>
</feature>
<feature type="short sequence motif" description="Histidine box-1" evidence="6">
    <location>
        <begin position="211"/>
        <end position="215"/>
    </location>
</feature>
<feature type="short sequence motif" description="Histidine box-2" evidence="6">
    <location>
        <begin position="226"/>
        <end position="230"/>
    </location>
</feature>
<feature type="short sequence motif" description="Histidine box-3" evidence="6">
    <location>
        <begin position="308"/>
        <end position="312"/>
    </location>
</feature>
<feature type="compositionally biased region" description="Basic and acidic residues" evidence="2">
    <location>
        <begin position="1"/>
        <end position="10"/>
    </location>
</feature>
<feature type="compositionally biased region" description="Low complexity" evidence="2">
    <location>
        <begin position="12"/>
        <end position="26"/>
    </location>
</feature>
<feature type="mutagenesis site" description="Abolishes squalene epoxidase activity." evidence="3">
    <original>H</original>
    <variation>A</variation>
    <location>
        <position position="211"/>
    </location>
</feature>
<feature type="mutagenesis site" description="Reduces squalene epoxidase activity." evidence="3">
    <original>H</original>
    <variation>A</variation>
    <location>
        <position position="215"/>
    </location>
</feature>
<feature type="mutagenesis site" description="Abolishes squalene epoxidase activity." evidence="3">
    <original>H</original>
    <variation>A</variation>
    <location>
        <position position="226"/>
    </location>
</feature>
<feature type="mutagenesis site" description="Abolishes squalene epoxidase activity." evidence="3">
    <original>H</original>
    <variation>A</variation>
    <location>
        <position position="229"/>
    </location>
</feature>
<feature type="mutagenesis site" description="Reduces squalene epoxidase activity." evidence="3">
    <original>H</original>
    <variation>A</variation>
    <location>
        <position position="230"/>
    </location>
</feature>
<feature type="mutagenesis site" description="Abolishes squalene epoxidase activity." evidence="3">
    <original>H</original>
    <variation>A</variation>
    <location>
        <position position="286"/>
    </location>
</feature>
<feature type="mutagenesis site" description="Abolishes squalene epoxidase activity." evidence="3">
    <original>H</original>
    <variation>A</variation>
    <location>
        <position position="308"/>
    </location>
</feature>
<feature type="mutagenesis site" description="Abolishes squalene epoxidase activity." evidence="3">
    <original>H</original>
    <variation>A</variation>
    <location>
        <position position="311"/>
    </location>
</feature>
<feature type="mutagenesis site" description="Abolishes squalene epoxidase activity." evidence="3">
    <original>H</original>
    <variation>A</variation>
    <location>
        <position position="312"/>
    </location>
</feature>
<dbReference type="EC" id="1.14.19.-" evidence="3"/>
<dbReference type="EMBL" id="MH422131">
    <property type="protein sequence ID" value="AYI99264.1"/>
    <property type="molecule type" value="mRNA"/>
</dbReference>
<dbReference type="EMBL" id="CM000610">
    <property type="protein sequence ID" value="EEC48820.1"/>
    <property type="molecule type" value="Genomic_DNA"/>
</dbReference>
<dbReference type="RefSeq" id="XP_002179834.1">
    <property type="nucleotide sequence ID" value="XM_002179798.1"/>
</dbReference>
<dbReference type="STRING" id="556484.B7FXW1"/>
<dbReference type="PaxDb" id="2850-Phatr45494"/>
<dbReference type="EnsemblProtists" id="Phatr3_J45494.t1">
    <property type="protein sequence ID" value="Phatr3_J45494.p1"/>
    <property type="gene ID" value="Phatr3_J45494"/>
</dbReference>
<dbReference type="GeneID" id="7200710"/>
<dbReference type="KEGG" id="pti:PHATRDRAFT_45494"/>
<dbReference type="eggNOG" id="ENOG502QSQM">
    <property type="taxonomic scope" value="Eukaryota"/>
</dbReference>
<dbReference type="HOGENOM" id="CLU_798026_0_0_1"/>
<dbReference type="InParanoid" id="B7FXW1"/>
<dbReference type="OMA" id="REYIFRE"/>
<dbReference type="OrthoDB" id="408954at2759"/>
<dbReference type="Proteomes" id="UP000000759">
    <property type="component" value="Chromosome 7"/>
</dbReference>
<dbReference type="GO" id="GO:0005789">
    <property type="term" value="C:endoplasmic reticulum membrane"/>
    <property type="evidence" value="ECO:0000314"/>
    <property type="project" value="UniProtKB"/>
</dbReference>
<dbReference type="GO" id="GO:0005506">
    <property type="term" value="F:iron ion binding"/>
    <property type="evidence" value="ECO:0007669"/>
    <property type="project" value="InterPro"/>
</dbReference>
<dbReference type="GO" id="GO:0004497">
    <property type="term" value="F:monooxygenase activity"/>
    <property type="evidence" value="ECO:0000315"/>
    <property type="project" value="UniProtKB"/>
</dbReference>
<dbReference type="GO" id="GO:0016126">
    <property type="term" value="P:sterol biosynthetic process"/>
    <property type="evidence" value="ECO:0000315"/>
    <property type="project" value="UniProtKB"/>
</dbReference>
<dbReference type="InterPro" id="IPR006694">
    <property type="entry name" value="Fatty_acid_hydroxylase"/>
</dbReference>
<dbReference type="InterPro" id="IPR050307">
    <property type="entry name" value="Sterol_Desaturase_Related"/>
</dbReference>
<dbReference type="PANTHER" id="PTHR11863">
    <property type="entry name" value="STEROL DESATURASE"/>
    <property type="match status" value="1"/>
</dbReference>
<dbReference type="Pfam" id="PF04116">
    <property type="entry name" value="FA_hydroxylase"/>
    <property type="match status" value="1"/>
</dbReference>